<evidence type="ECO:0000255" key="1">
    <source>
        <dbReference type="HAMAP-Rule" id="MF_00391"/>
    </source>
</evidence>
<evidence type="ECO:0000256" key="2">
    <source>
        <dbReference type="SAM" id="MobiDB-lite"/>
    </source>
</evidence>
<evidence type="ECO:0000305" key="3"/>
<organism>
    <name type="scientific">Desulfosudis oleivorans (strain DSM 6200 / JCM 39069 / Hxd3)</name>
    <name type="common">Desulfococcus oleovorans</name>
    <dbReference type="NCBI Taxonomy" id="96561"/>
    <lineage>
        <taxon>Bacteria</taxon>
        <taxon>Pseudomonadati</taxon>
        <taxon>Thermodesulfobacteriota</taxon>
        <taxon>Desulfobacteria</taxon>
        <taxon>Desulfobacterales</taxon>
        <taxon>Desulfosudaceae</taxon>
        <taxon>Desulfosudis</taxon>
    </lineage>
</organism>
<sequence>MKRTYQPSNVKRARKHGFRARMATKQGRSILKRRRAKGRKRLTV</sequence>
<name>RL34_DESOH</name>
<keyword id="KW-1185">Reference proteome</keyword>
<keyword id="KW-0687">Ribonucleoprotein</keyword>
<keyword id="KW-0689">Ribosomal protein</keyword>
<gene>
    <name evidence="1" type="primary">rpmH</name>
    <name type="ordered locus">Dole_0099</name>
</gene>
<dbReference type="EMBL" id="CP000859">
    <property type="protein sequence ID" value="ABW65909.1"/>
    <property type="molecule type" value="Genomic_DNA"/>
</dbReference>
<dbReference type="RefSeq" id="WP_012173528.1">
    <property type="nucleotide sequence ID" value="NC_009943.1"/>
</dbReference>
<dbReference type="SMR" id="A8ZRZ2"/>
<dbReference type="STRING" id="96561.Dole_0099"/>
<dbReference type="KEGG" id="dol:Dole_0099"/>
<dbReference type="eggNOG" id="COG0230">
    <property type="taxonomic scope" value="Bacteria"/>
</dbReference>
<dbReference type="HOGENOM" id="CLU_129938_2_0_7"/>
<dbReference type="OrthoDB" id="9804164at2"/>
<dbReference type="Proteomes" id="UP000008561">
    <property type="component" value="Chromosome"/>
</dbReference>
<dbReference type="GO" id="GO:1990904">
    <property type="term" value="C:ribonucleoprotein complex"/>
    <property type="evidence" value="ECO:0007669"/>
    <property type="project" value="UniProtKB-KW"/>
</dbReference>
<dbReference type="GO" id="GO:0005840">
    <property type="term" value="C:ribosome"/>
    <property type="evidence" value="ECO:0007669"/>
    <property type="project" value="UniProtKB-KW"/>
</dbReference>
<dbReference type="GO" id="GO:0003735">
    <property type="term" value="F:structural constituent of ribosome"/>
    <property type="evidence" value="ECO:0007669"/>
    <property type="project" value="InterPro"/>
</dbReference>
<dbReference type="GO" id="GO:0006412">
    <property type="term" value="P:translation"/>
    <property type="evidence" value="ECO:0007669"/>
    <property type="project" value="UniProtKB-UniRule"/>
</dbReference>
<dbReference type="FunFam" id="1.10.287.3980:FF:000001">
    <property type="entry name" value="Mitochondrial ribosomal protein L34"/>
    <property type="match status" value="1"/>
</dbReference>
<dbReference type="Gene3D" id="1.10.287.3980">
    <property type="match status" value="1"/>
</dbReference>
<dbReference type="HAMAP" id="MF_00391">
    <property type="entry name" value="Ribosomal_bL34"/>
    <property type="match status" value="1"/>
</dbReference>
<dbReference type="InterPro" id="IPR000271">
    <property type="entry name" value="Ribosomal_bL34"/>
</dbReference>
<dbReference type="InterPro" id="IPR020939">
    <property type="entry name" value="Ribosomal_bL34_CS"/>
</dbReference>
<dbReference type="NCBIfam" id="TIGR01030">
    <property type="entry name" value="rpmH_bact"/>
    <property type="match status" value="1"/>
</dbReference>
<dbReference type="PANTHER" id="PTHR14503:SF4">
    <property type="entry name" value="LARGE RIBOSOMAL SUBUNIT PROTEIN BL34M"/>
    <property type="match status" value="1"/>
</dbReference>
<dbReference type="PANTHER" id="PTHR14503">
    <property type="entry name" value="MITOCHONDRIAL RIBOSOMAL PROTEIN 34 FAMILY MEMBER"/>
    <property type="match status" value="1"/>
</dbReference>
<dbReference type="Pfam" id="PF00468">
    <property type="entry name" value="Ribosomal_L34"/>
    <property type="match status" value="1"/>
</dbReference>
<dbReference type="PROSITE" id="PS00784">
    <property type="entry name" value="RIBOSOMAL_L34"/>
    <property type="match status" value="1"/>
</dbReference>
<protein>
    <recommendedName>
        <fullName evidence="1">Large ribosomal subunit protein bL34</fullName>
    </recommendedName>
    <alternativeName>
        <fullName evidence="3">50S ribosomal protein L34</fullName>
    </alternativeName>
</protein>
<feature type="chain" id="PRO_1000196035" description="Large ribosomal subunit protein bL34">
    <location>
        <begin position="1"/>
        <end position="44"/>
    </location>
</feature>
<feature type="region of interest" description="Disordered" evidence="2">
    <location>
        <begin position="1"/>
        <end position="44"/>
    </location>
</feature>
<feature type="compositionally biased region" description="Basic residues" evidence="2">
    <location>
        <begin position="30"/>
        <end position="44"/>
    </location>
</feature>
<proteinExistence type="inferred from homology"/>
<reference key="1">
    <citation type="submission" date="2007-10" db="EMBL/GenBank/DDBJ databases">
        <title>Complete sequence of Desulfococcus oleovorans Hxd3.</title>
        <authorList>
            <consortium name="US DOE Joint Genome Institute"/>
            <person name="Copeland A."/>
            <person name="Lucas S."/>
            <person name="Lapidus A."/>
            <person name="Barry K."/>
            <person name="Glavina del Rio T."/>
            <person name="Dalin E."/>
            <person name="Tice H."/>
            <person name="Pitluck S."/>
            <person name="Kiss H."/>
            <person name="Brettin T."/>
            <person name="Bruce D."/>
            <person name="Detter J.C."/>
            <person name="Han C."/>
            <person name="Schmutz J."/>
            <person name="Larimer F."/>
            <person name="Land M."/>
            <person name="Hauser L."/>
            <person name="Kyrpides N."/>
            <person name="Kim E."/>
            <person name="Wawrik B."/>
            <person name="Richardson P."/>
        </authorList>
    </citation>
    <scope>NUCLEOTIDE SEQUENCE [LARGE SCALE GENOMIC DNA]</scope>
    <source>
        <strain>DSM 6200 / JCM 39069 / Hxd3</strain>
    </source>
</reference>
<comment type="similarity">
    <text evidence="1">Belongs to the bacterial ribosomal protein bL34 family.</text>
</comment>
<accession>A8ZRZ2</accession>